<keyword id="KW-0997">Cell inner membrane</keyword>
<keyword id="KW-1003">Cell membrane</keyword>
<keyword id="KW-0406">Ion transport</keyword>
<keyword id="KW-0472">Membrane</keyword>
<keyword id="KW-0630">Potassium</keyword>
<keyword id="KW-0633">Potassium transport</keyword>
<keyword id="KW-1185">Reference proteome</keyword>
<keyword id="KW-0812">Transmembrane</keyword>
<keyword id="KW-1133">Transmembrane helix</keyword>
<keyword id="KW-0813">Transport</keyword>
<accession>A8AJB7</accession>
<gene>
    <name evidence="1" type="primary">kdpA</name>
    <name type="ordered locus">CKO_02463</name>
</gene>
<dbReference type="EMBL" id="CP000822">
    <property type="protein sequence ID" value="ABV13580.1"/>
    <property type="molecule type" value="Genomic_DNA"/>
</dbReference>
<dbReference type="RefSeq" id="WP_012133304.1">
    <property type="nucleotide sequence ID" value="NC_009792.1"/>
</dbReference>
<dbReference type="SMR" id="A8AJB7"/>
<dbReference type="STRING" id="290338.CKO_02463"/>
<dbReference type="GeneID" id="45136351"/>
<dbReference type="KEGG" id="cko:CKO_02463"/>
<dbReference type="HOGENOM" id="CLU_018614_3_0_6"/>
<dbReference type="OrthoDB" id="9763796at2"/>
<dbReference type="Proteomes" id="UP000008148">
    <property type="component" value="Chromosome"/>
</dbReference>
<dbReference type="GO" id="GO:0005886">
    <property type="term" value="C:plasma membrane"/>
    <property type="evidence" value="ECO:0007669"/>
    <property type="project" value="UniProtKB-SubCell"/>
</dbReference>
<dbReference type="GO" id="GO:0008556">
    <property type="term" value="F:P-type potassium transmembrane transporter activity"/>
    <property type="evidence" value="ECO:0007669"/>
    <property type="project" value="InterPro"/>
</dbReference>
<dbReference type="GO" id="GO:0030955">
    <property type="term" value="F:potassium ion binding"/>
    <property type="evidence" value="ECO:0007669"/>
    <property type="project" value="UniProtKB-UniRule"/>
</dbReference>
<dbReference type="HAMAP" id="MF_00275">
    <property type="entry name" value="KdpA"/>
    <property type="match status" value="1"/>
</dbReference>
<dbReference type="InterPro" id="IPR004623">
    <property type="entry name" value="KdpA"/>
</dbReference>
<dbReference type="NCBIfam" id="TIGR00680">
    <property type="entry name" value="kdpA"/>
    <property type="match status" value="1"/>
</dbReference>
<dbReference type="PANTHER" id="PTHR30607">
    <property type="entry name" value="POTASSIUM-TRANSPORTING ATPASE A CHAIN"/>
    <property type="match status" value="1"/>
</dbReference>
<dbReference type="PANTHER" id="PTHR30607:SF2">
    <property type="entry name" value="POTASSIUM-TRANSPORTING ATPASE POTASSIUM-BINDING SUBUNIT"/>
    <property type="match status" value="1"/>
</dbReference>
<dbReference type="Pfam" id="PF03814">
    <property type="entry name" value="KdpA"/>
    <property type="match status" value="1"/>
</dbReference>
<dbReference type="PIRSF" id="PIRSF001294">
    <property type="entry name" value="K_ATPaseA"/>
    <property type="match status" value="1"/>
</dbReference>
<proteinExistence type="inferred from homology"/>
<reference key="1">
    <citation type="submission" date="2007-08" db="EMBL/GenBank/DDBJ databases">
        <authorList>
            <consortium name="The Citrobacter koseri Genome Sequencing Project"/>
            <person name="McClelland M."/>
            <person name="Sanderson E.K."/>
            <person name="Porwollik S."/>
            <person name="Spieth J."/>
            <person name="Clifton W.S."/>
            <person name="Latreille P."/>
            <person name="Courtney L."/>
            <person name="Wang C."/>
            <person name="Pepin K."/>
            <person name="Bhonagiri V."/>
            <person name="Nash W."/>
            <person name="Johnson M."/>
            <person name="Thiruvilangam P."/>
            <person name="Wilson R."/>
        </authorList>
    </citation>
    <scope>NUCLEOTIDE SEQUENCE [LARGE SCALE GENOMIC DNA]</scope>
    <source>
        <strain>ATCC BAA-895 / CDC 4225-83 / SGSC4696</strain>
    </source>
</reference>
<name>KDPA_CITK8</name>
<protein>
    <recommendedName>
        <fullName evidence="1">Potassium-transporting ATPase potassium-binding subunit</fullName>
    </recommendedName>
    <alternativeName>
        <fullName evidence="1">ATP phosphohydrolase [potassium-transporting] A chain</fullName>
    </alternativeName>
    <alternativeName>
        <fullName evidence="1">Potassium-binding and translocating subunit A</fullName>
    </alternativeName>
    <alternativeName>
        <fullName evidence="1">Potassium-translocating ATPase A chain</fullName>
    </alternativeName>
</protein>
<comment type="function">
    <text evidence="1">Part of the high-affinity ATP-driven potassium transport (or Kdp) system, which catalyzes the hydrolysis of ATP coupled with the electrogenic transport of potassium into the cytoplasm. This subunit binds the periplasmic potassium ions and delivers the ions to the membrane domain of KdpB through an intramembrane tunnel.</text>
</comment>
<comment type="subunit">
    <text evidence="1">The system is composed of three essential subunits: KdpA, KdpB and KdpC.</text>
</comment>
<comment type="subcellular location">
    <subcellularLocation>
        <location evidence="1">Cell inner membrane</location>
        <topology evidence="1">Multi-pass membrane protein</topology>
    </subcellularLocation>
</comment>
<comment type="similarity">
    <text evidence="1">Belongs to the KdpA family.</text>
</comment>
<organism>
    <name type="scientific">Citrobacter koseri (strain ATCC BAA-895 / CDC 4225-83 / SGSC4696)</name>
    <dbReference type="NCBI Taxonomy" id="290338"/>
    <lineage>
        <taxon>Bacteria</taxon>
        <taxon>Pseudomonadati</taxon>
        <taxon>Pseudomonadota</taxon>
        <taxon>Gammaproteobacteria</taxon>
        <taxon>Enterobacterales</taxon>
        <taxon>Enterobacteriaceae</taxon>
        <taxon>Citrobacter</taxon>
    </lineage>
</organism>
<evidence type="ECO:0000255" key="1">
    <source>
        <dbReference type="HAMAP-Rule" id="MF_00275"/>
    </source>
</evidence>
<feature type="chain" id="PRO_1000022215" description="Potassium-transporting ATPase potassium-binding subunit">
    <location>
        <begin position="1"/>
        <end position="559"/>
    </location>
</feature>
<feature type="transmembrane region" description="Helical" evidence="1">
    <location>
        <begin position="5"/>
        <end position="25"/>
    </location>
</feature>
<feature type="transmembrane region" description="Helical" evidence="1">
    <location>
        <begin position="63"/>
        <end position="83"/>
    </location>
</feature>
<feature type="transmembrane region" description="Helical" evidence="1">
    <location>
        <begin position="132"/>
        <end position="152"/>
    </location>
</feature>
<feature type="transmembrane region" description="Helical" evidence="1">
    <location>
        <begin position="170"/>
        <end position="190"/>
    </location>
</feature>
<feature type="transmembrane region" description="Helical" evidence="1">
    <location>
        <begin position="250"/>
        <end position="270"/>
    </location>
</feature>
<feature type="transmembrane region" description="Helical" evidence="1">
    <location>
        <begin position="283"/>
        <end position="303"/>
    </location>
</feature>
<feature type="transmembrane region" description="Helical" evidence="1">
    <location>
        <begin position="329"/>
        <end position="349"/>
    </location>
</feature>
<feature type="transmembrane region" description="Helical" evidence="1">
    <location>
        <begin position="356"/>
        <end position="376"/>
    </location>
</feature>
<feature type="transmembrane region" description="Helical" evidence="1">
    <location>
        <begin position="379"/>
        <end position="399"/>
    </location>
</feature>
<feature type="transmembrane region" description="Helical" evidence="1">
    <location>
        <begin position="416"/>
        <end position="436"/>
    </location>
</feature>
<feature type="transmembrane region" description="Helical" evidence="1">
    <location>
        <begin position="484"/>
        <end position="504"/>
    </location>
</feature>
<feature type="transmembrane region" description="Helical" evidence="1">
    <location>
        <begin position="524"/>
        <end position="544"/>
    </location>
</feature>
<sequence length="559" mass="59519">MAAQGFLLTASFLLILFVLARPLGVGLARLINDIPLPGTASVERLLWRGLGISTQEMDWKQYLLAILTLNLLGLTVLFLMLLGQNLLPLNPQQLPGLSWHLALNTAISFVTNTNWQSYGGETTLSYFSQMAGLTVQNFLSAATGIAVIFALIRAFTRQNIDTLGNAWMDLVRITLWILLPLALLIALLFIQQGALQNLLPYQSFTSVEGVKQLLPMGPVASQEAIKMLGTNGGGFFNANSSHPFENPSALTNMVQMLAIFLIPAALCFAFGDASGDRRQGQMLLWAMSIIFVVCVAVVMSAEVQGNPHLLKFGTDSSLNMEGKESRFGVLVSSLFAVVTTAASCGAVIAMHDSFTALGGMVPMWLMQIGEVVFGGVGSGLYGMLLFVLLAVFIAGLMIGRTPEYLGKKIDVREMKMTALAILITPTLVLLGTALAMMTETGRSGMLNPGPHGFSEVLYAVSSAANNNGSAFAGLNANTPFWNCLLAFCMFVGRFGVIIPVMAIAGSLVGKKRQPASPGTLPTHGALFVGLLIGTVLLVGALTFIPALALGPVAEHLSLY</sequence>